<accession>P02882</accession>
<keyword id="KW-0002">3D-structure</keyword>
<keyword id="KW-0903">Direct protein sequencing</keyword>
<keyword id="KW-0776">Taste-modifying protein</keyword>
<sequence>GEWEIIDIGPFTQNLGKFAVDEENKIGQYGRLTFNKVIRPCMKKTIYEEN</sequence>
<dbReference type="PIR" id="JH0210">
    <property type="entry name" value="MLDIB"/>
</dbReference>
<dbReference type="PDB" id="1FA3">
    <property type="method" value="NMR"/>
    <property type="chains" value="A=1-48"/>
</dbReference>
<dbReference type="PDB" id="1FUW">
    <property type="method" value="NMR"/>
    <property type="chains" value="A=1-48"/>
</dbReference>
<dbReference type="PDB" id="1IV7">
    <property type="method" value="X-ray"/>
    <property type="resolution" value="1.82 A"/>
    <property type="chains" value="A/B=1-48"/>
</dbReference>
<dbReference type="PDB" id="1IV9">
    <property type="method" value="X-ray"/>
    <property type="resolution" value="1.90 A"/>
    <property type="chains" value="A/B=1-50"/>
</dbReference>
<dbReference type="PDB" id="1KRL">
    <property type="method" value="X-ray"/>
    <property type="resolution" value="1.90 A"/>
    <property type="chains" value="B/D=1-50"/>
</dbReference>
<dbReference type="PDB" id="1M9G">
    <property type="method" value="NMR"/>
    <property type="chains" value="A=1-48"/>
</dbReference>
<dbReference type="PDB" id="1MNL">
    <property type="method" value="NMR"/>
    <property type="chains" value="A=1-48"/>
</dbReference>
<dbReference type="PDB" id="1MOL">
    <property type="method" value="X-ray"/>
    <property type="resolution" value="1.70 A"/>
    <property type="chains" value="A/B=1-48"/>
</dbReference>
<dbReference type="PDB" id="2O9U">
    <property type="method" value="X-ray"/>
    <property type="resolution" value="1.15 A"/>
    <property type="chains" value="X=1-48"/>
</dbReference>
<dbReference type="PDB" id="3MON">
    <property type="method" value="X-ray"/>
    <property type="resolution" value="2.80 A"/>
    <property type="chains" value="B/D/F/H=1-48"/>
</dbReference>
<dbReference type="PDB" id="3PXM">
    <property type="method" value="X-ray"/>
    <property type="resolution" value="1.80 A"/>
    <property type="chains" value="A/B=1-48"/>
</dbReference>
<dbReference type="PDB" id="3PYJ">
    <property type="method" value="X-ray"/>
    <property type="resolution" value="2.00 A"/>
    <property type="chains" value="A=1-48"/>
</dbReference>
<dbReference type="PDB" id="3Q2P">
    <property type="method" value="X-ray"/>
    <property type="resolution" value="2.34 A"/>
    <property type="chains" value="A/B/C/D=1-48"/>
</dbReference>
<dbReference type="PDB" id="4MON">
    <property type="method" value="X-ray"/>
    <property type="resolution" value="2.30 A"/>
    <property type="chains" value="B/D=1-48"/>
</dbReference>
<dbReference type="PDB" id="5LC6">
    <property type="method" value="X-ray"/>
    <property type="resolution" value="1.70 A"/>
    <property type="chains" value="A/B=1-48"/>
</dbReference>
<dbReference type="PDB" id="5LC7">
    <property type="method" value="X-ray"/>
    <property type="resolution" value="1.55 A"/>
    <property type="chains" value="A/B=1-48"/>
</dbReference>
<dbReference type="PDB" id="5O7K">
    <property type="method" value="X-ray"/>
    <property type="resolution" value="2.05 A"/>
    <property type="chains" value="A/B=1-48"/>
</dbReference>
<dbReference type="PDB" id="5O7L">
    <property type="method" value="X-ray"/>
    <property type="resolution" value="2.60 A"/>
    <property type="chains" value="A/B=1-48"/>
</dbReference>
<dbReference type="PDB" id="5O7Q">
    <property type="method" value="X-ray"/>
    <property type="resolution" value="1.72 A"/>
    <property type="chains" value="A/B=1-48"/>
</dbReference>
<dbReference type="PDB" id="5O7R">
    <property type="method" value="X-ray"/>
    <property type="resolution" value="2.06 A"/>
    <property type="chains" value="A/B=1-48"/>
</dbReference>
<dbReference type="PDB" id="5O7S">
    <property type="method" value="X-ray"/>
    <property type="resolution" value="2.02 A"/>
    <property type="chains" value="A/B=1-48"/>
</dbReference>
<dbReference type="PDB" id="5XFU">
    <property type="method" value="X-ray"/>
    <property type="resolution" value="2.61 A"/>
    <property type="chains" value="A/B/C/D/E=1-48"/>
</dbReference>
<dbReference type="PDB" id="5YCT">
    <property type="method" value="X-ray"/>
    <property type="resolution" value="1.85 A"/>
    <property type="chains" value="A/B=1-48"/>
</dbReference>
<dbReference type="PDB" id="5YCU">
    <property type="method" value="X-ray"/>
    <property type="resolution" value="2.32 A"/>
    <property type="chains" value="A/B/C/D/E=1-46"/>
</dbReference>
<dbReference type="PDB" id="5YCW">
    <property type="method" value="X-ray"/>
    <property type="resolution" value="2.29 A"/>
    <property type="chains" value="A=1-46"/>
</dbReference>
<dbReference type="PDB" id="5Z1P">
    <property type="method" value="X-ray"/>
    <property type="resolution" value="1.89 A"/>
    <property type="chains" value="A/B/C/D=1-48"/>
</dbReference>
<dbReference type="PDB" id="6L44">
    <property type="method" value="X-ray"/>
    <property type="resolution" value="2.49 A"/>
    <property type="chains" value="A/B=1-46"/>
</dbReference>
<dbReference type="PDB" id="6L4I">
    <property type="method" value="X-ray"/>
    <property type="resolution" value="2.20 A"/>
    <property type="chains" value="A/B=1-48"/>
</dbReference>
<dbReference type="PDB" id="6L4J">
    <property type="method" value="X-ray"/>
    <property type="resolution" value="2.30 A"/>
    <property type="chains" value="A/B=1-48"/>
</dbReference>
<dbReference type="PDB" id="6L4N">
    <property type="method" value="X-ray"/>
    <property type="resolution" value="2.43 A"/>
    <property type="chains" value="A/B=1-46"/>
</dbReference>
<dbReference type="PDB" id="6LAY">
    <property type="method" value="X-ray"/>
    <property type="resolution" value="3.00 A"/>
    <property type="chains" value="A/B=1-48"/>
</dbReference>
<dbReference type="PDB" id="7D75">
    <property type="method" value="X-ray"/>
    <property type="resolution" value="2.50 A"/>
    <property type="chains" value="A/B/C/D=1-49"/>
</dbReference>
<dbReference type="PDB" id="7EUA">
    <property type="method" value="X-ray"/>
    <property type="resolution" value="2.43 A"/>
    <property type="chains" value="A=1-48"/>
</dbReference>
<dbReference type="PDB" id="7VWW">
    <property type="method" value="X-ray"/>
    <property type="resolution" value="2.70 A"/>
    <property type="chains" value="A/B/C/D/E/F/G/H=1-48"/>
</dbReference>
<dbReference type="PDB" id="8JZ0">
    <property type="method" value="X-ray"/>
    <property type="resolution" value="1.23 A"/>
    <property type="chains" value="A/B=1-48"/>
</dbReference>
<dbReference type="PDB" id="8JZ1">
    <property type="method" value="X-ray"/>
    <property type="resolution" value="1.24 A"/>
    <property type="chains" value="A/B=1-48"/>
</dbReference>
<dbReference type="PDB" id="8Q0R">
    <property type="method" value="X-ray"/>
    <property type="resolution" value="1.55 A"/>
    <property type="chains" value="AAA/BBB=1-48"/>
</dbReference>
<dbReference type="PDB" id="8Q0S">
    <property type="method" value="X-ray"/>
    <property type="resolution" value="1.19 A"/>
    <property type="chains" value="AAA/BBB=1-48"/>
</dbReference>
<dbReference type="PDB" id="8TM8">
    <property type="method" value="X-ray"/>
    <property type="resolution" value="2.26 A"/>
    <property type="chains" value="A/B=1-48"/>
</dbReference>
<dbReference type="PDBsum" id="1FA3"/>
<dbReference type="PDBsum" id="1FUW"/>
<dbReference type="PDBsum" id="1IV7"/>
<dbReference type="PDBsum" id="1IV9"/>
<dbReference type="PDBsum" id="1KRL"/>
<dbReference type="PDBsum" id="1M9G"/>
<dbReference type="PDBsum" id="1MNL"/>
<dbReference type="PDBsum" id="1MOL"/>
<dbReference type="PDBsum" id="2O9U"/>
<dbReference type="PDBsum" id="3MON"/>
<dbReference type="PDBsum" id="3PXM"/>
<dbReference type="PDBsum" id="3PYJ"/>
<dbReference type="PDBsum" id="3Q2P"/>
<dbReference type="PDBsum" id="4MON"/>
<dbReference type="PDBsum" id="5LC6"/>
<dbReference type="PDBsum" id="5LC7"/>
<dbReference type="PDBsum" id="5O7K"/>
<dbReference type="PDBsum" id="5O7L"/>
<dbReference type="PDBsum" id="5O7Q"/>
<dbReference type="PDBsum" id="5O7R"/>
<dbReference type="PDBsum" id="5O7S"/>
<dbReference type="PDBsum" id="5XFU"/>
<dbReference type="PDBsum" id="5YCT"/>
<dbReference type="PDBsum" id="5YCU"/>
<dbReference type="PDBsum" id="5YCW"/>
<dbReference type="PDBsum" id="5Z1P"/>
<dbReference type="PDBsum" id="6L44"/>
<dbReference type="PDBsum" id="6L4I"/>
<dbReference type="PDBsum" id="6L4J"/>
<dbReference type="PDBsum" id="6L4N"/>
<dbReference type="PDBsum" id="6LAY"/>
<dbReference type="PDBsum" id="7D75"/>
<dbReference type="PDBsum" id="7EUA"/>
<dbReference type="PDBsum" id="7VWW"/>
<dbReference type="PDBsum" id="8JZ0"/>
<dbReference type="PDBsum" id="8JZ1"/>
<dbReference type="PDBsum" id="8Q0R"/>
<dbReference type="PDBsum" id="8Q0S"/>
<dbReference type="PDBsum" id="8TM8"/>
<dbReference type="BMRB" id="P02882"/>
<dbReference type="PCDDB" id="P02882"/>
<dbReference type="SMR" id="P02882"/>
<dbReference type="IntAct" id="P02882">
    <property type="interactions" value="1"/>
</dbReference>
<dbReference type="MINT" id="P02882"/>
<dbReference type="EvolutionaryTrace" id="P02882"/>
<dbReference type="Gene3D" id="6.10.140.2000">
    <property type="match status" value="1"/>
</dbReference>
<dbReference type="InterPro" id="IPR046350">
    <property type="entry name" value="Cystatin_sf"/>
</dbReference>
<dbReference type="InterPro" id="IPR015283">
    <property type="entry name" value="Monellin"/>
</dbReference>
<dbReference type="InterPro" id="IPR002095">
    <property type="entry name" value="Monellin_B"/>
</dbReference>
<dbReference type="InterPro" id="IPR053768">
    <property type="entry name" value="Sweet-Taste_Mod_sf"/>
</dbReference>
<dbReference type="Pfam" id="PF09200">
    <property type="entry name" value="Monellin"/>
    <property type="match status" value="1"/>
</dbReference>
<dbReference type="PRINTS" id="PR00631">
    <property type="entry name" value="MONELLINB"/>
</dbReference>
<dbReference type="SUPFAM" id="SSF54403">
    <property type="entry name" value="Cystatin/monellin"/>
    <property type="match status" value="1"/>
</dbReference>
<reference key="1">
    <citation type="journal article" date="1990" name="Agric. Biol. Chem.">
        <title>Complete amino acid sequence of the sweet protein monellin.</title>
        <authorList>
            <person name="Kohmura M."/>
            <person name="Nio N."/>
            <person name="Ariyoshi Y."/>
        </authorList>
    </citation>
    <scope>PROTEIN SEQUENCE</scope>
</reference>
<reference key="2">
    <citation type="journal article" date="1976" name="Hoppe-Seyler's Z. Physiol. Chem.">
        <title>The complete amino acid sequences of both subunits of the sweet protein monellin.</title>
        <authorList>
            <person name="Frank G."/>
            <person name="Zuber H."/>
        </authorList>
    </citation>
    <scope>PROTEIN SEQUENCE</scope>
</reference>
<reference key="3">
    <citation type="journal article" date="1976" name="Biochim. Biophys. Acta">
        <title>The structure of monellin and its relation to the sweetness of the protein.</title>
        <authorList>
            <person name="Bohak Z."/>
            <person name="Li S.-L."/>
        </authorList>
    </citation>
    <scope>PROTEIN SEQUENCE</scope>
</reference>
<reference key="4">
    <citation type="journal article" date="1987" name="Nature">
        <title>Crystal structure of the intensely sweet protein monellin.</title>
        <authorList>
            <person name="Ogata C."/>
            <person name="Hatada M."/>
            <person name="Tomlinson G."/>
            <person name="Shin W.-C."/>
            <person name="Kim S.-H."/>
        </authorList>
    </citation>
    <scope>X-RAY CRYSTALLOGRAPHY (3.0 ANGSTROMS)</scope>
</reference>
<reference key="5">
    <citation type="journal article" date="1993" name="J. Mol. Biol.">
        <title>Two crystal structures of a potently sweet protein. Natural monellin at 2.75-A resolution and single-chain monellin at 1.7-A resolution.</title>
        <authorList>
            <person name="Somoza J.R."/>
            <person name="Jiang F."/>
            <person name="Tong L."/>
            <person name="Kang C.-H."/>
            <person name="Cho J.M."/>
            <person name="Kim S.-H."/>
        </authorList>
    </citation>
    <scope>X-RAY CRYSTALLOGRAPHY (1.7 ANGSTROMS)</scope>
</reference>
<reference key="6">
    <citation type="journal article" date="1997" name="Acta Crystallogr. D">
        <title>Structure of monellin refined to 2.3-A resolution in the orthorhombic crystal form.</title>
        <authorList>
            <person name="Bujacz G."/>
            <person name="Miller M."/>
            <person name="Harrison R."/>
            <person name="Thanki N."/>
            <person name="Gilliland G.L."/>
            <person name="Ogata C."/>
            <person name="Kim S.-H."/>
            <person name="Wlodawer A."/>
        </authorList>
    </citation>
    <scope>X-RAY CRYSTALLOGRAPHY (2.3 ANGSTROMS)</scope>
</reference>
<reference key="7">
    <citation type="journal article" date="1993" name="J. Mol. Biol.">
        <title>Sweet-tasting protein monellin is related to the cystatin family of thiol proteinase inhibitors.</title>
        <authorList>
            <person name="Murzin A.G."/>
        </authorList>
    </citation>
    <scope>SIMILARITY TO CYSTATINS</scope>
</reference>
<evidence type="ECO:0000305" key="1"/>
<evidence type="ECO:0007829" key="2">
    <source>
        <dbReference type="PDB" id="2O9U"/>
    </source>
</evidence>
<evidence type="ECO:0007829" key="3">
    <source>
        <dbReference type="PDB" id="5LC7"/>
    </source>
</evidence>
<comment type="function">
    <text>Taste-modifying protein; intensely sweet-tasting protein.</text>
</comment>
<comment type="subunit">
    <text>Heterodimer of an A chain and a B chain.</text>
</comment>
<comment type="biotechnology">
    <text>Natural monellin has not been mass marketed to the food industry, primarily due to the challenge of large-scale purification of the protein which is relatively sensitive to heat or acid treatment.</text>
</comment>
<organism>
    <name type="scientific">Dioscoreophyllum cumminsii</name>
    <name type="common">Serendipity berry</name>
    <name type="synonym">Rhopalandria cumminsii</name>
    <dbReference type="NCBI Taxonomy" id="3457"/>
    <lineage>
        <taxon>Eukaryota</taxon>
        <taxon>Viridiplantae</taxon>
        <taxon>Streptophyta</taxon>
        <taxon>Embryophyta</taxon>
        <taxon>Tracheophyta</taxon>
        <taxon>Spermatophyta</taxon>
        <taxon>Magnoliopsida</taxon>
        <taxon>Ranunculales</taxon>
        <taxon>Menispermaceae</taxon>
        <taxon>Chasmantheroideae</taxon>
        <taxon>Burasaieae</taxon>
        <taxon>Dioscoreophyllum</taxon>
    </lineage>
</organism>
<name>MONB_DIOCU</name>
<feature type="chain" id="PRO_0000207166" description="Monellin chain B">
    <location>
        <begin position="1"/>
        <end position="50"/>
    </location>
</feature>
<feature type="site" description="Blocking, abolishes the sweet taste">
    <location>
        <position position="41"/>
    </location>
</feature>
<feature type="sequence conflict" description="In Ref. 2; AA sequence." evidence="1" ref="2">
    <original>EN</original>
    <variation>NE</variation>
    <location>
        <begin position="49"/>
        <end position="50"/>
    </location>
</feature>
<feature type="strand" evidence="2">
    <location>
        <begin position="4"/>
        <end position="6"/>
    </location>
</feature>
<feature type="helix" evidence="2">
    <location>
        <begin position="10"/>
        <end position="26"/>
    </location>
</feature>
<feature type="turn" evidence="3">
    <location>
        <begin position="27"/>
        <end position="29"/>
    </location>
</feature>
<feature type="strand" evidence="2">
    <location>
        <begin position="34"/>
        <end position="47"/>
    </location>
</feature>
<proteinExistence type="evidence at protein level"/>
<protein>
    <recommendedName>
        <fullName>Monellin chain B</fullName>
    </recommendedName>
    <alternativeName>
        <fullName>Monellin chain II</fullName>
    </alternativeName>
</protein>